<proteinExistence type="inferred from homology"/>
<sequence length="290" mass="33617">MKNTFSRLFGFGDKESEFELQDESHEEIDKKVYEEIQEIPIVNITPNRYQPRTVFDDARIEELALTIRTHGLIQPIVVRQYEDDKYEIIAGERRFRAATKLGWEKVPAIIKNLNDTETASVALIENLQREELTAIEEAVAYQKLIELHNLTQEALAQRLGKGQSTIANKLRLLKLPEEIKSALLEKSITERHARALIPLKNEELQLKVLQEIVEKQLNVKQTEERITKLLEEAKPKRKAKQKAVSRDTRIAMNTIRQSLQMVADSGLNVNSEEEEFDEYYQITIQIPKKK</sequence>
<organism>
    <name type="scientific">Bacillus anthracis (strain CDC 684 / NRRL 3495)</name>
    <dbReference type="NCBI Taxonomy" id="568206"/>
    <lineage>
        <taxon>Bacteria</taxon>
        <taxon>Bacillati</taxon>
        <taxon>Bacillota</taxon>
        <taxon>Bacilli</taxon>
        <taxon>Bacillales</taxon>
        <taxon>Bacillaceae</taxon>
        <taxon>Bacillus</taxon>
        <taxon>Bacillus cereus group</taxon>
    </lineage>
</organism>
<dbReference type="EMBL" id="CP001215">
    <property type="protein sequence ID" value="ACP15613.1"/>
    <property type="molecule type" value="Genomic_DNA"/>
</dbReference>
<dbReference type="RefSeq" id="WP_000799028.1">
    <property type="nucleotide sequence ID" value="NC_012581.1"/>
</dbReference>
<dbReference type="SMR" id="C3LGT8"/>
<dbReference type="GeneID" id="45025309"/>
<dbReference type="KEGG" id="bah:BAMEG_5782"/>
<dbReference type="HOGENOM" id="CLU_023853_0_1_9"/>
<dbReference type="GO" id="GO:0005694">
    <property type="term" value="C:chromosome"/>
    <property type="evidence" value="ECO:0007669"/>
    <property type="project" value="TreeGrafter"/>
</dbReference>
<dbReference type="GO" id="GO:0005737">
    <property type="term" value="C:cytoplasm"/>
    <property type="evidence" value="ECO:0007669"/>
    <property type="project" value="UniProtKB-UniRule"/>
</dbReference>
<dbReference type="GO" id="GO:0009295">
    <property type="term" value="C:nucleoid"/>
    <property type="evidence" value="ECO:0007669"/>
    <property type="project" value="UniProtKB-SubCell"/>
</dbReference>
<dbReference type="GO" id="GO:0003677">
    <property type="term" value="F:DNA binding"/>
    <property type="evidence" value="ECO:0007669"/>
    <property type="project" value="UniProtKB-UniRule"/>
</dbReference>
<dbReference type="GO" id="GO:0007059">
    <property type="term" value="P:chromosome segregation"/>
    <property type="evidence" value="ECO:0007669"/>
    <property type="project" value="TreeGrafter"/>
</dbReference>
<dbReference type="GO" id="GO:0000917">
    <property type="term" value="P:division septum assembly"/>
    <property type="evidence" value="ECO:0007669"/>
    <property type="project" value="UniProtKB-KW"/>
</dbReference>
<dbReference type="GO" id="GO:0045881">
    <property type="term" value="P:positive regulation of sporulation resulting in formation of a cellular spore"/>
    <property type="evidence" value="ECO:0007669"/>
    <property type="project" value="TreeGrafter"/>
</dbReference>
<dbReference type="CDD" id="cd16393">
    <property type="entry name" value="SPO0J_N"/>
    <property type="match status" value="1"/>
</dbReference>
<dbReference type="FunFam" id="1.10.10.2830:FF:000001">
    <property type="entry name" value="Chromosome partitioning protein ParB"/>
    <property type="match status" value="1"/>
</dbReference>
<dbReference type="FunFam" id="3.90.1530.30:FF:000001">
    <property type="entry name" value="Chromosome partitioning protein ParB"/>
    <property type="match status" value="1"/>
</dbReference>
<dbReference type="Gene3D" id="1.10.10.2830">
    <property type="match status" value="1"/>
</dbReference>
<dbReference type="Gene3D" id="3.90.1530.30">
    <property type="match status" value="1"/>
</dbReference>
<dbReference type="HAMAP" id="MF_02015">
    <property type="entry name" value="ParB_Noc"/>
    <property type="match status" value="1"/>
</dbReference>
<dbReference type="InterPro" id="IPR050336">
    <property type="entry name" value="Chromosome_partition/occlusion"/>
</dbReference>
<dbReference type="InterPro" id="IPR041468">
    <property type="entry name" value="HTH_ParB/Spo0J"/>
</dbReference>
<dbReference type="InterPro" id="IPR023705">
    <property type="entry name" value="Nucleoid_occlusion_protein"/>
</dbReference>
<dbReference type="InterPro" id="IPR004437">
    <property type="entry name" value="ParB/RepB/Spo0J"/>
</dbReference>
<dbReference type="InterPro" id="IPR003115">
    <property type="entry name" value="ParB/Sulfiredoxin_dom"/>
</dbReference>
<dbReference type="InterPro" id="IPR036086">
    <property type="entry name" value="ParB/Sulfiredoxin_sf"/>
</dbReference>
<dbReference type="NCBIfam" id="TIGR04285">
    <property type="entry name" value="nucleoid_noc"/>
    <property type="match status" value="1"/>
</dbReference>
<dbReference type="NCBIfam" id="TIGR00180">
    <property type="entry name" value="parB_part"/>
    <property type="match status" value="1"/>
</dbReference>
<dbReference type="PANTHER" id="PTHR33375">
    <property type="entry name" value="CHROMOSOME-PARTITIONING PROTEIN PARB-RELATED"/>
    <property type="match status" value="1"/>
</dbReference>
<dbReference type="PANTHER" id="PTHR33375:SF8">
    <property type="entry name" value="NUCLEOID OCCLUSION PROTEIN"/>
    <property type="match status" value="1"/>
</dbReference>
<dbReference type="Pfam" id="PF17762">
    <property type="entry name" value="HTH_ParB"/>
    <property type="match status" value="1"/>
</dbReference>
<dbReference type="Pfam" id="PF02195">
    <property type="entry name" value="ParBc"/>
    <property type="match status" value="1"/>
</dbReference>
<dbReference type="SMART" id="SM00470">
    <property type="entry name" value="ParB"/>
    <property type="match status" value="1"/>
</dbReference>
<dbReference type="SUPFAM" id="SSF110849">
    <property type="entry name" value="ParB/Sulfiredoxin"/>
    <property type="match status" value="1"/>
</dbReference>
<reference key="1">
    <citation type="submission" date="2008-10" db="EMBL/GenBank/DDBJ databases">
        <title>Genome sequence of Bacillus anthracis str. CDC 684.</title>
        <authorList>
            <person name="Dodson R.J."/>
            <person name="Munk A.C."/>
            <person name="Brettin T."/>
            <person name="Bruce D."/>
            <person name="Detter C."/>
            <person name="Tapia R."/>
            <person name="Han C."/>
            <person name="Sutton G."/>
            <person name="Sims D."/>
        </authorList>
    </citation>
    <scope>NUCLEOTIDE SEQUENCE [LARGE SCALE GENOMIC DNA]</scope>
    <source>
        <strain>CDC 684 / NRRL 3495</strain>
    </source>
</reference>
<comment type="function">
    <text evidence="1">Effects nucleoid occlusion by binding relatively nonspecifically to DNA and preventing the assembly of the division machinery in the vicinity of the nucleoid, especially under conditions that disturb the cell cycle. It helps to coordinate cell division and chromosome segregation by preventing the formation of the Z ring through the nucleoid, which would cause chromosome breakage.</text>
</comment>
<comment type="subcellular location">
    <subcellularLocation>
        <location evidence="1">Cytoplasm</location>
        <location evidence="1">Nucleoid</location>
    </subcellularLocation>
</comment>
<comment type="similarity">
    <text evidence="1">Belongs to the ParB family.</text>
</comment>
<gene>
    <name evidence="1" type="primary">noc</name>
    <name type="ordered locus">BAMEG_5782</name>
</gene>
<name>NOC_BACAC</name>
<keyword id="KW-0131">Cell cycle</keyword>
<keyword id="KW-0132">Cell division</keyword>
<keyword id="KW-0963">Cytoplasm</keyword>
<keyword id="KW-0238">DNA-binding</keyword>
<keyword id="KW-0717">Septation</keyword>
<evidence type="ECO:0000255" key="1">
    <source>
        <dbReference type="HAMAP-Rule" id="MF_02015"/>
    </source>
</evidence>
<protein>
    <recommendedName>
        <fullName evidence="1">Nucleoid occlusion protein</fullName>
        <shortName evidence="1">Noc</shortName>
    </recommendedName>
</protein>
<feature type="chain" id="PRO_1000189528" description="Nucleoid occlusion protein">
    <location>
        <begin position="1"/>
        <end position="290"/>
    </location>
</feature>
<feature type="DNA-binding region" description="H-T-H motif" evidence="1">
    <location>
        <begin position="153"/>
        <end position="172"/>
    </location>
</feature>
<accession>C3LGT8</accession>